<name>HEM3_RICPU</name>
<comment type="function">
    <text evidence="1">Tetrapolymerization of the monopyrrole PBG into the hydroxymethylbilane pre-uroporphyrinogen in several discrete steps.</text>
</comment>
<comment type="catalytic activity">
    <reaction evidence="1">
        <text>4 porphobilinogen + H2O = hydroxymethylbilane + 4 NH4(+)</text>
        <dbReference type="Rhea" id="RHEA:13185"/>
        <dbReference type="ChEBI" id="CHEBI:15377"/>
        <dbReference type="ChEBI" id="CHEBI:28938"/>
        <dbReference type="ChEBI" id="CHEBI:57845"/>
        <dbReference type="ChEBI" id="CHEBI:58126"/>
        <dbReference type="EC" id="2.5.1.61"/>
    </reaction>
</comment>
<comment type="cofactor">
    <cofactor evidence="1">
        <name>dipyrromethane</name>
        <dbReference type="ChEBI" id="CHEBI:60342"/>
    </cofactor>
    <text evidence="1">Binds 1 dipyrromethane group covalently.</text>
</comment>
<comment type="pathway">
    <text evidence="1">Porphyrin-containing compound metabolism; protoporphyrin-IX biosynthesis; coproporphyrinogen-III from 5-aminolevulinate: step 2/4.</text>
</comment>
<comment type="subunit">
    <text evidence="1">Monomer.</text>
</comment>
<comment type="miscellaneous">
    <text evidence="1">The porphobilinogen subunits are added to the dipyrromethane group.</text>
</comment>
<comment type="similarity">
    <text evidence="1">Belongs to the HMBS family.</text>
</comment>
<dbReference type="EC" id="2.5.1.61" evidence="1"/>
<dbReference type="EMBL" id="CP001227">
    <property type="protein sequence ID" value="ACR47663.1"/>
    <property type="molecule type" value="Genomic_DNA"/>
</dbReference>
<dbReference type="RefSeq" id="WP_012736867.1">
    <property type="nucleotide sequence ID" value="NC_012730.1"/>
</dbReference>
<dbReference type="SMR" id="C4K265"/>
<dbReference type="KEGG" id="rpk:RPR_05315"/>
<dbReference type="HOGENOM" id="CLU_019704_0_2_5"/>
<dbReference type="UniPathway" id="UPA00251">
    <property type="reaction ID" value="UER00319"/>
</dbReference>
<dbReference type="Proteomes" id="UP000005015">
    <property type="component" value="Chromosome"/>
</dbReference>
<dbReference type="GO" id="GO:0005737">
    <property type="term" value="C:cytoplasm"/>
    <property type="evidence" value="ECO:0007669"/>
    <property type="project" value="TreeGrafter"/>
</dbReference>
<dbReference type="GO" id="GO:0004418">
    <property type="term" value="F:hydroxymethylbilane synthase activity"/>
    <property type="evidence" value="ECO:0007669"/>
    <property type="project" value="UniProtKB-UniRule"/>
</dbReference>
<dbReference type="GO" id="GO:0006782">
    <property type="term" value="P:protoporphyrinogen IX biosynthetic process"/>
    <property type="evidence" value="ECO:0007669"/>
    <property type="project" value="UniProtKB-UniRule"/>
</dbReference>
<dbReference type="CDD" id="cd13647">
    <property type="entry name" value="PBP2_PBGD_2"/>
    <property type="match status" value="1"/>
</dbReference>
<dbReference type="FunFam" id="3.40.190.10:FF:000004">
    <property type="entry name" value="Porphobilinogen deaminase"/>
    <property type="match status" value="1"/>
</dbReference>
<dbReference type="FunFam" id="3.40.190.10:FF:000005">
    <property type="entry name" value="Porphobilinogen deaminase"/>
    <property type="match status" value="1"/>
</dbReference>
<dbReference type="Gene3D" id="3.40.190.10">
    <property type="entry name" value="Periplasmic binding protein-like II"/>
    <property type="match status" value="2"/>
</dbReference>
<dbReference type="Gene3D" id="3.30.160.40">
    <property type="entry name" value="Porphobilinogen deaminase, C-terminal domain"/>
    <property type="match status" value="1"/>
</dbReference>
<dbReference type="HAMAP" id="MF_00260">
    <property type="entry name" value="Porphobil_deam"/>
    <property type="match status" value="1"/>
</dbReference>
<dbReference type="InterPro" id="IPR000860">
    <property type="entry name" value="HemC"/>
</dbReference>
<dbReference type="InterPro" id="IPR022419">
    <property type="entry name" value="Porphobilin_deaminase_cofac_BS"/>
</dbReference>
<dbReference type="InterPro" id="IPR022417">
    <property type="entry name" value="Porphobilin_deaminase_N"/>
</dbReference>
<dbReference type="InterPro" id="IPR022418">
    <property type="entry name" value="Porphobilinogen_deaminase_C"/>
</dbReference>
<dbReference type="InterPro" id="IPR036803">
    <property type="entry name" value="Porphobilinogen_deaminase_C_sf"/>
</dbReference>
<dbReference type="InterPro" id="IPR005728">
    <property type="entry name" value="RPE1"/>
</dbReference>
<dbReference type="NCBIfam" id="TIGR00212">
    <property type="entry name" value="hemC"/>
    <property type="match status" value="1"/>
</dbReference>
<dbReference type="NCBIfam" id="TIGR01045">
    <property type="entry name" value="RPE1"/>
    <property type="match status" value="1"/>
</dbReference>
<dbReference type="PANTHER" id="PTHR11557">
    <property type="entry name" value="PORPHOBILINOGEN DEAMINASE"/>
    <property type="match status" value="1"/>
</dbReference>
<dbReference type="PANTHER" id="PTHR11557:SF0">
    <property type="entry name" value="PORPHOBILINOGEN DEAMINASE"/>
    <property type="match status" value="1"/>
</dbReference>
<dbReference type="Pfam" id="PF01379">
    <property type="entry name" value="Porphobil_deam"/>
    <property type="match status" value="1"/>
</dbReference>
<dbReference type="Pfam" id="PF03900">
    <property type="entry name" value="Porphobil_deamC"/>
    <property type="match status" value="1"/>
</dbReference>
<dbReference type="PIRSF" id="PIRSF001438">
    <property type="entry name" value="4pyrrol_synth_OHMeBilane_synth"/>
    <property type="match status" value="1"/>
</dbReference>
<dbReference type="PRINTS" id="PR00151">
    <property type="entry name" value="PORPHBDMNASE"/>
</dbReference>
<dbReference type="SUPFAM" id="SSF53850">
    <property type="entry name" value="Periplasmic binding protein-like II"/>
    <property type="match status" value="1"/>
</dbReference>
<dbReference type="SUPFAM" id="SSF54782">
    <property type="entry name" value="Porphobilinogen deaminase (hydroxymethylbilane synthase), C-terminal domain"/>
    <property type="match status" value="1"/>
</dbReference>
<dbReference type="PROSITE" id="PS00533">
    <property type="entry name" value="PORPHOBILINOGEN_DEAM"/>
    <property type="match status" value="1"/>
</dbReference>
<feature type="chain" id="PRO_1000204661" description="Porphobilinogen deaminase">
    <location>
        <begin position="1"/>
        <end position="351"/>
    </location>
</feature>
<feature type="modified residue" description="S-(dipyrrolylmethanemethyl)cysteine" evidence="1">
    <location>
        <position position="242"/>
    </location>
</feature>
<protein>
    <recommendedName>
        <fullName evidence="1">Porphobilinogen deaminase</fullName>
        <shortName evidence="1">PBG</shortName>
        <ecNumber evidence="1">2.5.1.61</ecNumber>
    </recommendedName>
    <alternativeName>
        <fullName evidence="1">Hydroxymethylbilane synthase</fullName>
        <shortName evidence="1">HMBS</shortName>
    </alternativeName>
    <alternativeName>
        <fullName evidence="1">Pre-uroporphyrinogen synthase</fullName>
    </alternativeName>
</protein>
<evidence type="ECO:0000255" key="1">
    <source>
        <dbReference type="HAMAP-Rule" id="MF_00260"/>
    </source>
</evidence>
<proteinExistence type="inferred from homology"/>
<organism>
    <name type="scientific">Rickettsia peacockii (strain Rustic)</name>
    <dbReference type="NCBI Taxonomy" id="562019"/>
    <lineage>
        <taxon>Bacteria</taxon>
        <taxon>Pseudomonadati</taxon>
        <taxon>Pseudomonadota</taxon>
        <taxon>Alphaproteobacteria</taxon>
        <taxon>Rickettsiales</taxon>
        <taxon>Rickettsiaceae</taxon>
        <taxon>Rickettsieae</taxon>
        <taxon>Rickettsia</taxon>
        <taxon>spotted fever group</taxon>
    </lineage>
</organism>
<gene>
    <name evidence="1" type="primary">hemC</name>
    <name type="ordered locus">RPR_05315</name>
</gene>
<accession>C4K265</accession>
<sequence>MTNSIRIGTRKSPLALIHTNLVIQQIKQFFPDINCEIVPIITSGDLIQNKPLYDIGGKALFLKEIEQALLDKKIDLAVHSLKDVPGRIPEPLVIAAVLEREDPRDVFVCLKYKSIEELPQNAVIGSSAVRRKAFIQKIRPDLKVTVFRGNVDSRIKKLMTGEVDATILAYTGLKRLEVFNPEYCHLIEYSQMLPCIGQGVIAVEIRKDDNAMLEICNQINHLPTFELIKPERAFLEYLDANCRTPIAAYSQYLDANPRHLSKLAYREVFEGNTEALATAAYKSNRTDASTGLTYKLPLEVEFGKMYNIQTNFMLGNLDGSKITFHTETTNIKTSTEAGIKAAKMMLEAICK</sequence>
<keyword id="KW-0627">Porphyrin biosynthesis</keyword>
<keyword id="KW-0808">Transferase</keyword>
<reference key="1">
    <citation type="journal article" date="2009" name="PLoS ONE">
        <title>Genome sequence of the endosymbiont Rickettsia peacockii and comparison with virulent Rickettsia rickettsii: identification of virulence factors.</title>
        <authorList>
            <person name="Felsheim R.F."/>
            <person name="Kurtti T.J."/>
            <person name="Munderloh U.G."/>
        </authorList>
    </citation>
    <scope>NUCLEOTIDE SEQUENCE [LARGE SCALE GENOMIC DNA]</scope>
    <source>
        <strain>Rustic</strain>
    </source>
</reference>